<sequence>MAIKAEEISALLKSQIENYESGMTVTDVGTVIQVGDGIALVHGLNNVMAGELVEFHNGVLGLAQNLEENNVGVVILGPFTDIKEGDEVKRTGRIMEVPVGEELIGRVVNPLGQPIDGRGPLNTTKTRPIESPATGVMDRKSVDEPLQTGIKAIDALVPIGRGQRELIIGDRQTGKTTVAIDTILNQKDEDMICVYVAIGQKESTVRTAVETLRAHGALDYTIVVSASASQPAPLLYIAPYAGVAMAEEFMFNGKHVLIVYDDLTKQAAAYRELSLLLRRPPGREAYPGDVFYLHSRLLERAAKLNDSLGGGSITALPFVETQAGDISAYVPTNVISITDGQIFLQSDLFFSGVRPAINAGLSVSRVGGSAQIKAMKKVAGTLRLDLASYRELESFAQFGSDLDPATKAKLERGKRTVEVLKQDQNKPLTVDKQVTILYALTKGHLDDIPVQDITRFEDEFLGWVGSNAPHIYQEIRETKGLPADEVFVEAINAFKKIFNKSEV</sequence>
<accession>B9E8E8</accession>
<organism>
    <name type="scientific">Macrococcus caseolyticus (strain JCSC5402)</name>
    <name type="common">Macrococcoides caseolyticum</name>
    <dbReference type="NCBI Taxonomy" id="458233"/>
    <lineage>
        <taxon>Bacteria</taxon>
        <taxon>Bacillati</taxon>
        <taxon>Bacillota</taxon>
        <taxon>Bacilli</taxon>
        <taxon>Bacillales</taxon>
        <taxon>Staphylococcaceae</taxon>
        <taxon>Macrococcoides</taxon>
    </lineage>
</organism>
<protein>
    <recommendedName>
        <fullName evidence="1">ATP synthase subunit alpha</fullName>
        <ecNumber evidence="1">7.1.2.2</ecNumber>
    </recommendedName>
    <alternativeName>
        <fullName evidence="1">ATP synthase F1 sector subunit alpha</fullName>
    </alternativeName>
    <alternativeName>
        <fullName evidence="1">F-ATPase subunit alpha</fullName>
    </alternativeName>
</protein>
<comment type="function">
    <text evidence="1">Produces ATP from ADP in the presence of a proton gradient across the membrane. The alpha chain is a regulatory subunit.</text>
</comment>
<comment type="catalytic activity">
    <reaction evidence="1">
        <text>ATP + H2O + 4 H(+)(in) = ADP + phosphate + 5 H(+)(out)</text>
        <dbReference type="Rhea" id="RHEA:57720"/>
        <dbReference type="ChEBI" id="CHEBI:15377"/>
        <dbReference type="ChEBI" id="CHEBI:15378"/>
        <dbReference type="ChEBI" id="CHEBI:30616"/>
        <dbReference type="ChEBI" id="CHEBI:43474"/>
        <dbReference type="ChEBI" id="CHEBI:456216"/>
        <dbReference type="EC" id="7.1.2.2"/>
    </reaction>
</comment>
<comment type="subunit">
    <text evidence="1">F-type ATPases have 2 components, CF(1) - the catalytic core - and CF(0) - the membrane proton channel. CF(1) has five subunits: alpha(3), beta(3), gamma(1), delta(1), epsilon(1). CF(0) has three main subunits: a(1), b(2) and c(9-12). The alpha and beta chains form an alternating ring which encloses part of the gamma chain. CF(1) is attached to CF(0) by a central stalk formed by the gamma and epsilon chains, while a peripheral stalk is formed by the delta and b chains.</text>
</comment>
<comment type="subcellular location">
    <subcellularLocation>
        <location evidence="1">Cell membrane</location>
        <topology evidence="1">Peripheral membrane protein</topology>
    </subcellularLocation>
</comment>
<comment type="similarity">
    <text evidence="1">Belongs to the ATPase alpha/beta chains family.</text>
</comment>
<keyword id="KW-0066">ATP synthesis</keyword>
<keyword id="KW-0067">ATP-binding</keyword>
<keyword id="KW-1003">Cell membrane</keyword>
<keyword id="KW-0139">CF(1)</keyword>
<keyword id="KW-0375">Hydrogen ion transport</keyword>
<keyword id="KW-0406">Ion transport</keyword>
<keyword id="KW-0472">Membrane</keyword>
<keyword id="KW-0547">Nucleotide-binding</keyword>
<keyword id="KW-1185">Reference proteome</keyword>
<keyword id="KW-1278">Translocase</keyword>
<keyword id="KW-0813">Transport</keyword>
<gene>
    <name evidence="1" type="primary">atpA</name>
    <name type="ordered locus">MCCL_1759</name>
</gene>
<evidence type="ECO:0000255" key="1">
    <source>
        <dbReference type="HAMAP-Rule" id="MF_01346"/>
    </source>
</evidence>
<proteinExistence type="inferred from homology"/>
<name>ATPA_MACCJ</name>
<dbReference type="EC" id="7.1.2.2" evidence="1"/>
<dbReference type="EMBL" id="AP009484">
    <property type="protein sequence ID" value="BAH18466.1"/>
    <property type="molecule type" value="Genomic_DNA"/>
</dbReference>
<dbReference type="RefSeq" id="WP_015912258.1">
    <property type="nucleotide sequence ID" value="NC_011999.1"/>
</dbReference>
<dbReference type="SMR" id="B9E8E8"/>
<dbReference type="STRING" id="458233.MCCL_1759"/>
<dbReference type="GeneID" id="61130138"/>
<dbReference type="KEGG" id="mcl:MCCL_1759"/>
<dbReference type="eggNOG" id="COG0056">
    <property type="taxonomic scope" value="Bacteria"/>
</dbReference>
<dbReference type="HOGENOM" id="CLU_010091_2_1_9"/>
<dbReference type="OrthoDB" id="9803053at2"/>
<dbReference type="Proteomes" id="UP000001383">
    <property type="component" value="Chromosome"/>
</dbReference>
<dbReference type="GO" id="GO:0005886">
    <property type="term" value="C:plasma membrane"/>
    <property type="evidence" value="ECO:0007669"/>
    <property type="project" value="UniProtKB-SubCell"/>
</dbReference>
<dbReference type="GO" id="GO:0045259">
    <property type="term" value="C:proton-transporting ATP synthase complex"/>
    <property type="evidence" value="ECO:0007669"/>
    <property type="project" value="UniProtKB-KW"/>
</dbReference>
<dbReference type="GO" id="GO:0043531">
    <property type="term" value="F:ADP binding"/>
    <property type="evidence" value="ECO:0007669"/>
    <property type="project" value="TreeGrafter"/>
</dbReference>
<dbReference type="GO" id="GO:0005524">
    <property type="term" value="F:ATP binding"/>
    <property type="evidence" value="ECO:0007669"/>
    <property type="project" value="UniProtKB-UniRule"/>
</dbReference>
<dbReference type="GO" id="GO:0046933">
    <property type="term" value="F:proton-transporting ATP synthase activity, rotational mechanism"/>
    <property type="evidence" value="ECO:0007669"/>
    <property type="project" value="UniProtKB-UniRule"/>
</dbReference>
<dbReference type="CDD" id="cd18113">
    <property type="entry name" value="ATP-synt_F1_alpha_C"/>
    <property type="match status" value="1"/>
</dbReference>
<dbReference type="CDD" id="cd18116">
    <property type="entry name" value="ATP-synt_F1_alpha_N"/>
    <property type="match status" value="1"/>
</dbReference>
<dbReference type="CDD" id="cd01132">
    <property type="entry name" value="F1-ATPase_alpha_CD"/>
    <property type="match status" value="1"/>
</dbReference>
<dbReference type="FunFam" id="1.20.150.20:FF:000001">
    <property type="entry name" value="ATP synthase subunit alpha"/>
    <property type="match status" value="1"/>
</dbReference>
<dbReference type="FunFam" id="2.40.30.20:FF:000001">
    <property type="entry name" value="ATP synthase subunit alpha"/>
    <property type="match status" value="1"/>
</dbReference>
<dbReference type="FunFam" id="3.40.50.300:FF:000002">
    <property type="entry name" value="ATP synthase subunit alpha"/>
    <property type="match status" value="1"/>
</dbReference>
<dbReference type="Gene3D" id="2.40.30.20">
    <property type="match status" value="1"/>
</dbReference>
<dbReference type="Gene3D" id="1.20.150.20">
    <property type="entry name" value="ATP synthase alpha/beta chain, C-terminal domain"/>
    <property type="match status" value="1"/>
</dbReference>
<dbReference type="Gene3D" id="3.40.50.300">
    <property type="entry name" value="P-loop containing nucleotide triphosphate hydrolases"/>
    <property type="match status" value="1"/>
</dbReference>
<dbReference type="HAMAP" id="MF_01346">
    <property type="entry name" value="ATP_synth_alpha_bact"/>
    <property type="match status" value="1"/>
</dbReference>
<dbReference type="InterPro" id="IPR023366">
    <property type="entry name" value="ATP_synth_asu-like_sf"/>
</dbReference>
<dbReference type="InterPro" id="IPR000793">
    <property type="entry name" value="ATP_synth_asu_C"/>
</dbReference>
<dbReference type="InterPro" id="IPR038376">
    <property type="entry name" value="ATP_synth_asu_C_sf"/>
</dbReference>
<dbReference type="InterPro" id="IPR033732">
    <property type="entry name" value="ATP_synth_F1_a_nt-bd_dom"/>
</dbReference>
<dbReference type="InterPro" id="IPR005294">
    <property type="entry name" value="ATP_synth_F1_asu"/>
</dbReference>
<dbReference type="InterPro" id="IPR020003">
    <property type="entry name" value="ATPase_a/bsu_AS"/>
</dbReference>
<dbReference type="InterPro" id="IPR004100">
    <property type="entry name" value="ATPase_F1/V1/A1_a/bsu_N"/>
</dbReference>
<dbReference type="InterPro" id="IPR036121">
    <property type="entry name" value="ATPase_F1/V1/A1_a/bsu_N_sf"/>
</dbReference>
<dbReference type="InterPro" id="IPR000194">
    <property type="entry name" value="ATPase_F1/V1/A1_a/bsu_nucl-bd"/>
</dbReference>
<dbReference type="InterPro" id="IPR027417">
    <property type="entry name" value="P-loop_NTPase"/>
</dbReference>
<dbReference type="NCBIfam" id="TIGR00962">
    <property type="entry name" value="atpA"/>
    <property type="match status" value="1"/>
</dbReference>
<dbReference type="NCBIfam" id="NF009884">
    <property type="entry name" value="PRK13343.1"/>
    <property type="match status" value="1"/>
</dbReference>
<dbReference type="PANTHER" id="PTHR48082">
    <property type="entry name" value="ATP SYNTHASE SUBUNIT ALPHA, MITOCHONDRIAL"/>
    <property type="match status" value="1"/>
</dbReference>
<dbReference type="PANTHER" id="PTHR48082:SF2">
    <property type="entry name" value="ATP SYNTHASE SUBUNIT ALPHA, MITOCHONDRIAL"/>
    <property type="match status" value="1"/>
</dbReference>
<dbReference type="Pfam" id="PF00006">
    <property type="entry name" value="ATP-synt_ab"/>
    <property type="match status" value="1"/>
</dbReference>
<dbReference type="Pfam" id="PF00306">
    <property type="entry name" value="ATP-synt_ab_C"/>
    <property type="match status" value="1"/>
</dbReference>
<dbReference type="Pfam" id="PF02874">
    <property type="entry name" value="ATP-synt_ab_N"/>
    <property type="match status" value="1"/>
</dbReference>
<dbReference type="PIRSF" id="PIRSF039088">
    <property type="entry name" value="F_ATPase_subunit_alpha"/>
    <property type="match status" value="1"/>
</dbReference>
<dbReference type="SUPFAM" id="SSF47917">
    <property type="entry name" value="C-terminal domain of alpha and beta subunits of F1 ATP synthase"/>
    <property type="match status" value="1"/>
</dbReference>
<dbReference type="SUPFAM" id="SSF50615">
    <property type="entry name" value="N-terminal domain of alpha and beta subunits of F1 ATP synthase"/>
    <property type="match status" value="1"/>
</dbReference>
<dbReference type="SUPFAM" id="SSF52540">
    <property type="entry name" value="P-loop containing nucleoside triphosphate hydrolases"/>
    <property type="match status" value="1"/>
</dbReference>
<dbReference type="PROSITE" id="PS00152">
    <property type="entry name" value="ATPASE_ALPHA_BETA"/>
    <property type="match status" value="1"/>
</dbReference>
<reference key="1">
    <citation type="journal article" date="2009" name="J. Bacteriol.">
        <title>Complete genome sequence of Macrococcus caseolyticus strain JCSCS5402, reflecting the ancestral genome of the human-pathogenic staphylococci.</title>
        <authorList>
            <person name="Baba T."/>
            <person name="Kuwahara-Arai K."/>
            <person name="Uchiyama I."/>
            <person name="Takeuchi F."/>
            <person name="Ito T."/>
            <person name="Hiramatsu K."/>
        </authorList>
    </citation>
    <scope>NUCLEOTIDE SEQUENCE [LARGE SCALE GENOMIC DNA]</scope>
    <source>
        <strain>JCSC5402</strain>
    </source>
</reference>
<feature type="chain" id="PRO_1000166544" description="ATP synthase subunit alpha">
    <location>
        <begin position="1"/>
        <end position="503"/>
    </location>
</feature>
<feature type="binding site" evidence="1">
    <location>
        <begin position="169"/>
        <end position="176"/>
    </location>
    <ligand>
        <name>ATP</name>
        <dbReference type="ChEBI" id="CHEBI:30616"/>
    </ligand>
</feature>
<feature type="site" description="Required for activity" evidence="1">
    <location>
        <position position="362"/>
    </location>
</feature>